<evidence type="ECO:0000250" key="1"/>
<evidence type="ECO:0000256" key="2">
    <source>
        <dbReference type="SAM" id="MobiDB-lite"/>
    </source>
</evidence>
<evidence type="ECO:0000269" key="3">
    <source>
    </source>
</evidence>
<evidence type="ECO:0000269" key="4">
    <source>
    </source>
</evidence>
<evidence type="ECO:0000303" key="5">
    <source>
    </source>
</evidence>
<evidence type="ECO:0000305" key="6"/>
<evidence type="ECO:0000305" key="7">
    <source>
    </source>
</evidence>
<sequence length="555" mass="60602">MALNIADLVEHAIDLVPERVALASDGREVTYAQLEERANRLAHYLREQGVEPGDKVGIYSRNTIEAVEAMIAVFKIRAIMINVNYRYVENELQYIFDNSDMVALIHERRYSDKVANVLPSTPLVKTVVVVEDGTDVDFSAYGGIEYEAALAQSSPERDFEDRSADDIYILYTGGTTGHPKGVMWRHEDVWRVLGGGINFMTGEWVKDEWQLAKEGAENPGLVRYPIPPMIHGGAQWALFQSLFSGGKVIMHPEFSGHEVWRIIDDHKVNVIFITGDAMARPMLDALEEGNPKTGKPYDLSTLFAMASSAALFSPSIKDRFLDLLPGKIITDSIGSSETGFGGIGIAEKGKTLGGGPTVKIDESTTVLDDDGNPIEPGSGKVGMVARTGNIPLGYYKDEAKTKATFREYNGIRYSIPGDYARVEADGTVTMLGRGSVSINSGGEKVYPEEVEGALKQHPAVFDALVVGVPDERFGERVSAVVALRDGEQVTLDELMTTARSKIAGYKVPRAVWFVDEIKRSPAGKPDYRWAKDQTGLRPADEVYNNGDGNGAAATG</sequence>
<reference key="1">
    <citation type="journal article" date="2011" name="Appl. Environ. Microbiol.">
        <title>FadD19 of Rhodococcus rhodochrous DSM43269, a steroid-coenzyme A ligase essential for degradation of C-24 branched sterol side chains.</title>
        <authorList>
            <person name="Wilbrink M.H."/>
            <person name="Petrusma M."/>
            <person name="Dijkhuizen L."/>
            <person name="van der Geize R."/>
        </authorList>
    </citation>
    <scope>NUCLEOTIDE SEQUENCE [GENOMIC DNA]</scope>
    <scope>FUNCTION</scope>
    <scope>CATALYTIC ACTIVITY</scope>
    <scope>DISRUPTION PHENOTYPE</scope>
    <scope>SUBSTRATE SPECIFICITY</scope>
    <source>
        <strain>DSM43269</strain>
    </source>
</reference>
<reference key="2">
    <citation type="journal article" date="2014" name="J. Bacteriol.">
        <title>Actinobacterial acyl coenzyme A synthetases involved in steroid side-chain catabolism.</title>
        <authorList>
            <person name="Casabon I."/>
            <person name="Swain K."/>
            <person name="Crowe A.M."/>
            <person name="Eltis L.D."/>
            <person name="Mohn W.W."/>
        </authorList>
    </citation>
    <scope>FUNCTION</scope>
    <source>
        <strain>DSM43269</strain>
    </source>
</reference>
<protein>
    <recommendedName>
        <fullName evidence="5">3-oxocholest-4-en-26-oate--CoA ligase</fullName>
        <ecNumber evidence="3">6.2.1.42</ecNumber>
    </recommendedName>
    <alternativeName>
        <fullName evidence="5">Steroid-CoA ligase</fullName>
    </alternativeName>
    <alternativeName>
        <fullName evidence="5">Steroid-coenzyme A ligase</fullName>
    </alternativeName>
</protein>
<comment type="function">
    <text evidence="3 4">Involved in the degradation of the side chains of C-24 branched-chain sterols. Catalyzes the ATP-dependent CoA thioesterification of the sterol 3-oxocholest-4-en-26-oate to yield 3-oxocholest-4-en-26-oyl-CoA. It can also use beta-sitosterol, campesterol and 3beta-hydroxy-5-cholesten-26-oate.</text>
</comment>
<comment type="catalytic activity">
    <reaction evidence="3">
        <text>(25S)-3-oxocholest-4-en-26-oate + ATP + CoA = (25S)-3-oxocholest-4-en-26-oyl-CoA + AMP + diphosphate</text>
        <dbReference type="Rhea" id="RHEA:29291"/>
        <dbReference type="ChEBI" id="CHEBI:30616"/>
        <dbReference type="ChEBI" id="CHEBI:33019"/>
        <dbReference type="ChEBI" id="CHEBI:57287"/>
        <dbReference type="ChEBI" id="CHEBI:71541"/>
        <dbReference type="ChEBI" id="CHEBI:83819"/>
        <dbReference type="ChEBI" id="CHEBI:456215"/>
        <dbReference type="EC" id="6.2.1.42"/>
    </reaction>
</comment>
<comment type="pathway">
    <text evidence="7">Steroid metabolism; cholesterol metabolism.</text>
</comment>
<comment type="disruption phenotype">
    <text evidence="3">Cells lacking this gene are unable to degrade the side chain of C-24 branched sterols such as beta-sitosterol and campesterol.</text>
</comment>
<comment type="similarity">
    <text evidence="6">Belongs to the ATP-dependent AMP-binding enzyme family.</text>
</comment>
<keyword id="KW-0067">ATP-binding</keyword>
<keyword id="KW-0153">Cholesterol metabolism</keyword>
<keyword id="KW-0436">Ligase</keyword>
<keyword id="KW-0443">Lipid metabolism</keyword>
<keyword id="KW-0547">Nucleotide-binding</keyword>
<keyword id="KW-0753">Steroid metabolism</keyword>
<keyword id="KW-1207">Sterol metabolism</keyword>
<gene>
    <name evidence="5" type="primary">fadD19</name>
</gene>
<name>FAC19_RHORH</name>
<proteinExistence type="evidence at protein level"/>
<feature type="chain" id="PRO_0000430658" description="3-oxocholest-4-en-26-oate--CoA ligase">
    <location>
        <begin position="1"/>
        <end position="555"/>
    </location>
</feature>
<feature type="region of interest" description="Disordered" evidence="2">
    <location>
        <begin position="525"/>
        <end position="555"/>
    </location>
</feature>
<feature type="compositionally biased region" description="Low complexity" evidence="2">
    <location>
        <begin position="544"/>
        <end position="555"/>
    </location>
</feature>
<feature type="binding site" evidence="1">
    <location>
        <begin position="172"/>
        <end position="180"/>
    </location>
    <ligand>
        <name>ATP</name>
        <dbReference type="ChEBI" id="CHEBI:30616"/>
    </ligand>
</feature>
<feature type="binding site" evidence="1">
    <location>
        <position position="418"/>
    </location>
    <ligand>
        <name>ATP</name>
        <dbReference type="ChEBI" id="CHEBI:30616"/>
    </ligand>
</feature>
<feature type="binding site" evidence="1">
    <location>
        <position position="433"/>
    </location>
    <ligand>
        <name>ATP</name>
        <dbReference type="ChEBI" id="CHEBI:30616"/>
    </ligand>
</feature>
<feature type="binding site" evidence="1">
    <location>
        <position position="524"/>
    </location>
    <ligand>
        <name>ATP</name>
        <dbReference type="ChEBI" id="CHEBI:30616"/>
    </ligand>
</feature>
<dbReference type="EC" id="6.2.1.42" evidence="3"/>
<dbReference type="EMBL" id="HM588719">
    <property type="protein sequence ID" value="ADP09625.1"/>
    <property type="molecule type" value="Genomic_DNA"/>
</dbReference>
<dbReference type="RefSeq" id="WP_283479969.1">
    <property type="nucleotide sequence ID" value="NZ_JASIRK010000008.1"/>
</dbReference>
<dbReference type="SMR" id="E3UUE6"/>
<dbReference type="STRING" id="1829.GCA_000716895_01595"/>
<dbReference type="KEGG" id="ag:ADP09625"/>
<dbReference type="BioCyc" id="MetaCyc:MONOMER-16899"/>
<dbReference type="UniPathway" id="UPA00296"/>
<dbReference type="GO" id="GO:0016878">
    <property type="term" value="F:acid-thiol ligase activity"/>
    <property type="evidence" value="ECO:0007669"/>
    <property type="project" value="UniProtKB-ARBA"/>
</dbReference>
<dbReference type="GO" id="GO:0005524">
    <property type="term" value="F:ATP binding"/>
    <property type="evidence" value="ECO:0007669"/>
    <property type="project" value="UniProtKB-KW"/>
</dbReference>
<dbReference type="GO" id="GO:0008203">
    <property type="term" value="P:cholesterol metabolic process"/>
    <property type="evidence" value="ECO:0007669"/>
    <property type="project" value="UniProtKB-UniPathway"/>
</dbReference>
<dbReference type="CDD" id="cd05924">
    <property type="entry name" value="FACL_like_5"/>
    <property type="match status" value="1"/>
</dbReference>
<dbReference type="Gene3D" id="3.30.300.30">
    <property type="match status" value="1"/>
</dbReference>
<dbReference type="Gene3D" id="3.40.50.12780">
    <property type="entry name" value="N-terminal domain of ligase-like"/>
    <property type="match status" value="1"/>
</dbReference>
<dbReference type="InterPro" id="IPR025110">
    <property type="entry name" value="AMP-bd_C"/>
</dbReference>
<dbReference type="InterPro" id="IPR045851">
    <property type="entry name" value="AMP-bd_C_sf"/>
</dbReference>
<dbReference type="InterPro" id="IPR020845">
    <property type="entry name" value="AMP-binding_CS"/>
</dbReference>
<dbReference type="InterPro" id="IPR000873">
    <property type="entry name" value="AMP-dep_synth/lig_dom"/>
</dbReference>
<dbReference type="InterPro" id="IPR042099">
    <property type="entry name" value="ANL_N_sf"/>
</dbReference>
<dbReference type="InterPro" id="IPR050237">
    <property type="entry name" value="ATP-dep_AMP-bd_enzyme"/>
</dbReference>
<dbReference type="NCBIfam" id="NF005863">
    <property type="entry name" value="PRK07798.1"/>
    <property type="match status" value="1"/>
</dbReference>
<dbReference type="PANTHER" id="PTHR43767">
    <property type="entry name" value="LONG-CHAIN-FATTY-ACID--COA LIGASE"/>
    <property type="match status" value="1"/>
</dbReference>
<dbReference type="PANTHER" id="PTHR43767:SF1">
    <property type="entry name" value="NONRIBOSOMAL PEPTIDE SYNTHASE PES1 (EUROFUNG)-RELATED"/>
    <property type="match status" value="1"/>
</dbReference>
<dbReference type="Pfam" id="PF00501">
    <property type="entry name" value="AMP-binding"/>
    <property type="match status" value="1"/>
</dbReference>
<dbReference type="Pfam" id="PF13193">
    <property type="entry name" value="AMP-binding_C"/>
    <property type="match status" value="1"/>
</dbReference>
<dbReference type="SUPFAM" id="SSF56801">
    <property type="entry name" value="Acetyl-CoA synthetase-like"/>
    <property type="match status" value="1"/>
</dbReference>
<dbReference type="PROSITE" id="PS00455">
    <property type="entry name" value="AMP_BINDING"/>
    <property type="match status" value="1"/>
</dbReference>
<accession>E3UUE6</accession>
<organism>
    <name type="scientific">Rhodococcus rhodochrous</name>
    <dbReference type="NCBI Taxonomy" id="1829"/>
    <lineage>
        <taxon>Bacteria</taxon>
        <taxon>Bacillati</taxon>
        <taxon>Actinomycetota</taxon>
        <taxon>Actinomycetes</taxon>
        <taxon>Mycobacteriales</taxon>
        <taxon>Nocardiaceae</taxon>
        <taxon>Rhodococcus</taxon>
    </lineage>
</organism>